<comment type="function">
    <text evidence="1">Formation of pseudouridine at positions 38, 39 and 40 in the anticodon stem and loop of transfer RNAs.</text>
</comment>
<comment type="catalytic activity">
    <reaction evidence="1">
        <text>uridine(38/39/40) in tRNA = pseudouridine(38/39/40) in tRNA</text>
        <dbReference type="Rhea" id="RHEA:22376"/>
        <dbReference type="Rhea" id="RHEA-COMP:10085"/>
        <dbReference type="Rhea" id="RHEA-COMP:10087"/>
        <dbReference type="ChEBI" id="CHEBI:65314"/>
        <dbReference type="ChEBI" id="CHEBI:65315"/>
        <dbReference type="EC" id="5.4.99.12"/>
    </reaction>
</comment>
<comment type="subunit">
    <text evidence="1">Homodimer.</text>
</comment>
<comment type="similarity">
    <text evidence="1">Belongs to the tRNA pseudouridine synthase TruA family.</text>
</comment>
<organism>
    <name type="scientific">Brucella ovis (strain ATCC 25840 / 63/290 / NCTC 10512)</name>
    <dbReference type="NCBI Taxonomy" id="444178"/>
    <lineage>
        <taxon>Bacteria</taxon>
        <taxon>Pseudomonadati</taxon>
        <taxon>Pseudomonadota</taxon>
        <taxon>Alphaproteobacteria</taxon>
        <taxon>Hyphomicrobiales</taxon>
        <taxon>Brucellaceae</taxon>
        <taxon>Brucella/Ochrobactrum group</taxon>
        <taxon>Brucella</taxon>
    </lineage>
</organism>
<name>TRUA_BRUO2</name>
<gene>
    <name evidence="1" type="primary">truA</name>
    <name type="ordered locus">BOV_A0974</name>
</gene>
<dbReference type="EC" id="5.4.99.12" evidence="1"/>
<dbReference type="EMBL" id="CP000709">
    <property type="protein sequence ID" value="ABQ62778.1"/>
    <property type="molecule type" value="Genomic_DNA"/>
</dbReference>
<dbReference type="RefSeq" id="WP_002965618.1">
    <property type="nucleotide sequence ID" value="NC_009504.1"/>
</dbReference>
<dbReference type="SMR" id="A5VVT9"/>
<dbReference type="GeneID" id="97534918"/>
<dbReference type="KEGG" id="bov:BOV_A0974"/>
<dbReference type="HOGENOM" id="CLU_014673_0_2_5"/>
<dbReference type="PhylomeDB" id="A5VVT9"/>
<dbReference type="Proteomes" id="UP000006383">
    <property type="component" value="Chromosome II"/>
</dbReference>
<dbReference type="GO" id="GO:0003723">
    <property type="term" value="F:RNA binding"/>
    <property type="evidence" value="ECO:0007669"/>
    <property type="project" value="InterPro"/>
</dbReference>
<dbReference type="GO" id="GO:0160147">
    <property type="term" value="F:tRNA pseudouridine(38-40) synthase activity"/>
    <property type="evidence" value="ECO:0007669"/>
    <property type="project" value="UniProtKB-EC"/>
</dbReference>
<dbReference type="GO" id="GO:0031119">
    <property type="term" value="P:tRNA pseudouridine synthesis"/>
    <property type="evidence" value="ECO:0007669"/>
    <property type="project" value="UniProtKB-UniRule"/>
</dbReference>
<dbReference type="CDD" id="cd02570">
    <property type="entry name" value="PseudoU_synth_EcTruA"/>
    <property type="match status" value="1"/>
</dbReference>
<dbReference type="FunFam" id="3.30.70.580:FF:000001">
    <property type="entry name" value="tRNA pseudouridine synthase A"/>
    <property type="match status" value="1"/>
</dbReference>
<dbReference type="Gene3D" id="3.30.70.660">
    <property type="entry name" value="Pseudouridine synthase I, catalytic domain, C-terminal subdomain"/>
    <property type="match status" value="1"/>
</dbReference>
<dbReference type="Gene3D" id="3.30.70.580">
    <property type="entry name" value="Pseudouridine synthase I, catalytic domain, N-terminal subdomain"/>
    <property type="match status" value="1"/>
</dbReference>
<dbReference type="HAMAP" id="MF_00171">
    <property type="entry name" value="TruA"/>
    <property type="match status" value="1"/>
</dbReference>
<dbReference type="InterPro" id="IPR020103">
    <property type="entry name" value="PsdUridine_synth_cat_dom_sf"/>
</dbReference>
<dbReference type="InterPro" id="IPR001406">
    <property type="entry name" value="PsdUridine_synth_TruA"/>
</dbReference>
<dbReference type="InterPro" id="IPR020097">
    <property type="entry name" value="PsdUridine_synth_TruA_a/b_dom"/>
</dbReference>
<dbReference type="InterPro" id="IPR020095">
    <property type="entry name" value="PsdUridine_synth_TruA_C"/>
</dbReference>
<dbReference type="InterPro" id="IPR020094">
    <property type="entry name" value="TruA/RsuA/RluB/E/F_N"/>
</dbReference>
<dbReference type="NCBIfam" id="TIGR00071">
    <property type="entry name" value="hisT_truA"/>
    <property type="match status" value="1"/>
</dbReference>
<dbReference type="PANTHER" id="PTHR11142">
    <property type="entry name" value="PSEUDOURIDYLATE SYNTHASE"/>
    <property type="match status" value="1"/>
</dbReference>
<dbReference type="PANTHER" id="PTHR11142:SF0">
    <property type="entry name" value="TRNA PSEUDOURIDINE SYNTHASE-LIKE 1"/>
    <property type="match status" value="1"/>
</dbReference>
<dbReference type="Pfam" id="PF01416">
    <property type="entry name" value="PseudoU_synth_1"/>
    <property type="match status" value="2"/>
</dbReference>
<dbReference type="PIRSF" id="PIRSF001430">
    <property type="entry name" value="tRNA_psdUrid_synth"/>
    <property type="match status" value="1"/>
</dbReference>
<dbReference type="SUPFAM" id="SSF55120">
    <property type="entry name" value="Pseudouridine synthase"/>
    <property type="match status" value="1"/>
</dbReference>
<reference key="1">
    <citation type="journal article" date="2009" name="PLoS ONE">
        <title>Genome degradation in Brucella ovis corresponds with narrowing of its host range and tissue tropism.</title>
        <authorList>
            <person name="Tsolis R.M."/>
            <person name="Seshadri R."/>
            <person name="Santos R.L."/>
            <person name="Sangari F.J."/>
            <person name="Lobo J.M."/>
            <person name="de Jong M.F."/>
            <person name="Ren Q."/>
            <person name="Myers G."/>
            <person name="Brinkac L.M."/>
            <person name="Nelson W.C."/>
            <person name="Deboy R.T."/>
            <person name="Angiuoli S."/>
            <person name="Khouri H."/>
            <person name="Dimitrov G."/>
            <person name="Robinson J.R."/>
            <person name="Mulligan S."/>
            <person name="Walker R.L."/>
            <person name="Elzer P.E."/>
            <person name="Hassan K.A."/>
            <person name="Paulsen I.T."/>
        </authorList>
    </citation>
    <scope>NUCLEOTIDE SEQUENCE [LARGE SCALE GENOMIC DNA]</scope>
    <source>
        <strain>ATCC 25840 / 63/290 / NCTC 10512</strain>
    </source>
</reference>
<protein>
    <recommendedName>
        <fullName evidence="1">tRNA pseudouridine synthase A</fullName>
        <ecNumber evidence="1">5.4.99.12</ecNumber>
    </recommendedName>
    <alternativeName>
        <fullName evidence="1">tRNA pseudouridine(38-40) synthase</fullName>
    </alternativeName>
    <alternativeName>
        <fullName evidence="1">tRNA pseudouridylate synthase I</fullName>
    </alternativeName>
    <alternativeName>
        <fullName evidence="1">tRNA-uridine isomerase I</fullName>
    </alternativeName>
</protein>
<keyword id="KW-0413">Isomerase</keyword>
<keyword id="KW-0819">tRNA processing</keyword>
<evidence type="ECO:0000255" key="1">
    <source>
        <dbReference type="HAMAP-Rule" id="MF_00171"/>
    </source>
</evidence>
<accession>A5VVT9</accession>
<feature type="chain" id="PRO_1000017049" description="tRNA pseudouridine synthase A">
    <location>
        <begin position="1"/>
        <end position="251"/>
    </location>
</feature>
<feature type="active site" description="Nucleophile" evidence="1">
    <location>
        <position position="52"/>
    </location>
</feature>
<feature type="binding site" evidence="1">
    <location>
        <position position="113"/>
    </location>
    <ligand>
        <name>substrate</name>
    </ligand>
</feature>
<proteinExistence type="inferred from homology"/>
<sequence>MPRYKLTVEYDGTPYVGWQRQENGHAVQGAIEQAFKKFCGEDLTLSAAGRTDAGVHATAQVAHVDLAKDWGAGKVRDAVNAHLVMADERISILNVEKTTDTFDARFSARARHYLYRIHNRRAPLAVDYQRAWWVQKQLDADAMHEAAQRLLGEHDFTTFRATQCQAKSPVKTLDRLDVTRNGDMVEMRVSARSFLHNQVRSFAGSLMEVGVGRWTADDLQAALEARDRKACGQVAPPYGLYLVGVDYAFPF</sequence>